<gene>
    <name type="primary">mtrA</name>
    <name type="ordered locus">MSMEG_1874</name>
    <name type="ordered locus">MSMEI_1835</name>
</gene>
<reference key="1">
    <citation type="submission" date="2006-10" db="EMBL/GenBank/DDBJ databases">
        <authorList>
            <person name="Fleischmann R.D."/>
            <person name="Dodson R.J."/>
            <person name="Haft D.H."/>
            <person name="Merkel J.S."/>
            <person name="Nelson W.C."/>
            <person name="Fraser C.M."/>
        </authorList>
    </citation>
    <scope>NUCLEOTIDE SEQUENCE [LARGE SCALE GENOMIC DNA]</scope>
    <source>
        <strain>ATCC 700084 / mc(2)155</strain>
    </source>
</reference>
<reference key="2">
    <citation type="journal article" date="2007" name="Genome Biol.">
        <title>Interrupted coding sequences in Mycobacterium smegmatis: authentic mutations or sequencing errors?</title>
        <authorList>
            <person name="Deshayes C."/>
            <person name="Perrodou E."/>
            <person name="Gallien S."/>
            <person name="Euphrasie D."/>
            <person name="Schaeffer C."/>
            <person name="Van-Dorsselaer A."/>
            <person name="Poch O."/>
            <person name="Lecompte O."/>
            <person name="Reyrat J.-M."/>
        </authorList>
    </citation>
    <scope>NUCLEOTIDE SEQUENCE [LARGE SCALE GENOMIC DNA]</scope>
    <source>
        <strain>ATCC 700084 / mc(2)155</strain>
    </source>
</reference>
<reference key="3">
    <citation type="journal article" date="2009" name="Genome Res.">
        <title>Ortho-proteogenomics: multiple proteomes investigation through orthology and a new MS-based protocol.</title>
        <authorList>
            <person name="Gallien S."/>
            <person name="Perrodou E."/>
            <person name="Carapito C."/>
            <person name="Deshayes C."/>
            <person name="Reyrat J.-M."/>
            <person name="Van Dorsselaer A."/>
            <person name="Poch O."/>
            <person name="Schaeffer C."/>
            <person name="Lecompte O."/>
        </authorList>
    </citation>
    <scope>NUCLEOTIDE SEQUENCE [LARGE SCALE GENOMIC DNA]</scope>
    <source>
        <strain>ATCC 700084 / mc(2)155</strain>
    </source>
</reference>
<reference key="4">
    <citation type="journal article" date="2010" name="Mol. Microbiol.">
        <title>A lipoprotein modulates activity of the MtrAB two-component system to provide intrinsic multidrug resistance, cytokinetic control and cell wall homeostasis in Mycobacterium.</title>
        <authorList>
            <person name="Nguyen H.T."/>
            <person name="Wolff K.A."/>
            <person name="Cartabuke R.H."/>
            <person name="Ogwang S."/>
            <person name="Nguyen L."/>
        </authorList>
    </citation>
    <scope>PROBABLE FUNCTION</scope>
    <scope>SUBUNIT</scope>
    <scope>PHOSPHORYLATION</scope>
    <scope>MUTAGENESIS OF ASP-56</scope>
    <source>
        <strain>ATCC 700084 / mc(2)155</strain>
    </source>
</reference>
<organism>
    <name type="scientific">Mycolicibacterium smegmatis (strain ATCC 700084 / mc(2)155)</name>
    <name type="common">Mycobacterium smegmatis</name>
    <dbReference type="NCBI Taxonomy" id="246196"/>
    <lineage>
        <taxon>Bacteria</taxon>
        <taxon>Bacillati</taxon>
        <taxon>Actinomycetota</taxon>
        <taxon>Actinomycetes</taxon>
        <taxon>Mycobacteriales</taxon>
        <taxon>Mycobacteriaceae</taxon>
        <taxon>Mycolicibacterium</taxon>
    </lineage>
</organism>
<accession>A0QTK2</accession>
<accession>I7FYZ5</accession>
<evidence type="ECO:0000250" key="1"/>
<evidence type="ECO:0000255" key="2">
    <source>
        <dbReference type="PROSITE-ProRule" id="PRU00169"/>
    </source>
</evidence>
<evidence type="ECO:0000255" key="3">
    <source>
        <dbReference type="PROSITE-ProRule" id="PRU01091"/>
    </source>
</evidence>
<evidence type="ECO:0000269" key="4">
    <source>
    </source>
</evidence>
<evidence type="ECO:0000305" key="5"/>
<evidence type="ECO:0000305" key="6">
    <source>
    </source>
</evidence>
<comment type="function">
    <text evidence="5">Member of the two-component regulatory system MtrA/MtrB, responding to environmental signals (Probable). Controls expression of a number of genes including dnaA, ripA, fbpB and probably itself. Probably plays a role in cell division.</text>
</comment>
<comment type="subunit">
    <text evidence="1 4">Probably a monomer when inactive, phosphorylation may permit it to oligomerize (By similarity). The monomeric form does not seem to be phosphorylated.</text>
</comment>
<comment type="subcellular location">
    <subcellularLocation>
        <location evidence="1">Cytoplasm</location>
    </subcellularLocation>
</comment>
<comment type="PTM">
    <text evidence="6">Phosphorylated by MtrB.</text>
</comment>
<comment type="sequence caution" evidence="5">
    <conflict type="erroneous initiation">
        <sequence resource="EMBL-CDS" id="AFP38307"/>
    </conflict>
    <text>Truncated N-terminus.</text>
</comment>
<keyword id="KW-0963">Cytoplasm</keyword>
<keyword id="KW-0238">DNA-binding</keyword>
<keyword id="KW-0597">Phosphoprotein</keyword>
<keyword id="KW-1185">Reference proteome</keyword>
<keyword id="KW-0804">Transcription</keyword>
<keyword id="KW-0805">Transcription regulation</keyword>
<keyword id="KW-0902">Two-component regulatory system</keyword>
<feature type="chain" id="PRO_0000421122" description="DNA-binding response regulator MtrA">
    <location>
        <begin position="1"/>
        <end position="228"/>
    </location>
</feature>
<feature type="domain" description="Response regulatory" evidence="2">
    <location>
        <begin position="7"/>
        <end position="120"/>
    </location>
</feature>
<feature type="DNA-binding region" description="OmpR/PhoB-type" evidence="3">
    <location>
        <begin position="128"/>
        <end position="227"/>
    </location>
</feature>
<feature type="modified residue" description="4-aspartylphosphate" evidence="2">
    <location>
        <position position="56"/>
    </location>
</feature>
<feature type="mutagenesis site" description="Does not complement an lpqB disruption mutant, when overexpressed causes the same symptoms as an lpqB disruption (antibiotic sensitivity, defects in cell morphology and biofilm formation)." evidence="4">
    <original>D</original>
    <variation>A</variation>
    <location>
        <position position="56"/>
    </location>
</feature>
<feature type="mutagenesis site" description="Complements an lpqB disruption mutant, when overexpressed restores biofilm formation to the lpqB disruption. Acts like a dominant negative to wild-type." evidence="4">
    <original>D</original>
    <variation>E</variation>
    <location>
        <position position="56"/>
    </location>
</feature>
<dbReference type="EMBL" id="CP000480">
    <property type="protein sequence ID" value="ABK69775.1"/>
    <property type="molecule type" value="Genomic_DNA"/>
</dbReference>
<dbReference type="EMBL" id="CP001663">
    <property type="protein sequence ID" value="AFP38307.1"/>
    <property type="status" value="ALT_INIT"/>
    <property type="molecule type" value="Genomic_DNA"/>
</dbReference>
<dbReference type="RefSeq" id="WP_011727971.1">
    <property type="nucleotide sequence ID" value="NZ_SIJM01000020.1"/>
</dbReference>
<dbReference type="RefSeq" id="YP_886240.1">
    <property type="nucleotide sequence ID" value="NC_008596.1"/>
</dbReference>
<dbReference type="SMR" id="A0QTK2"/>
<dbReference type="STRING" id="246196.MSMEG_1874"/>
<dbReference type="PaxDb" id="246196-MSMEI_1835"/>
<dbReference type="GeneID" id="93456687"/>
<dbReference type="KEGG" id="msb:LJ00_09355"/>
<dbReference type="KEGG" id="msg:MSMEI_1835"/>
<dbReference type="KEGG" id="msm:MSMEG_1874"/>
<dbReference type="PATRIC" id="fig|246196.19.peg.1856"/>
<dbReference type="eggNOG" id="COG0745">
    <property type="taxonomic scope" value="Bacteria"/>
</dbReference>
<dbReference type="OrthoDB" id="4481605at2"/>
<dbReference type="Proteomes" id="UP000000757">
    <property type="component" value="Chromosome"/>
</dbReference>
<dbReference type="Proteomes" id="UP000006158">
    <property type="component" value="Chromosome"/>
</dbReference>
<dbReference type="GO" id="GO:0005829">
    <property type="term" value="C:cytosol"/>
    <property type="evidence" value="ECO:0007669"/>
    <property type="project" value="TreeGrafter"/>
</dbReference>
<dbReference type="GO" id="GO:0032993">
    <property type="term" value="C:protein-DNA complex"/>
    <property type="evidence" value="ECO:0007669"/>
    <property type="project" value="TreeGrafter"/>
</dbReference>
<dbReference type="GO" id="GO:0000156">
    <property type="term" value="F:phosphorelay response regulator activity"/>
    <property type="evidence" value="ECO:0007669"/>
    <property type="project" value="InterPro"/>
</dbReference>
<dbReference type="GO" id="GO:0000976">
    <property type="term" value="F:transcription cis-regulatory region binding"/>
    <property type="evidence" value="ECO:0007669"/>
    <property type="project" value="InterPro"/>
</dbReference>
<dbReference type="GO" id="GO:0045893">
    <property type="term" value="P:positive regulation of DNA-templated transcription"/>
    <property type="evidence" value="ECO:0007669"/>
    <property type="project" value="InterPro"/>
</dbReference>
<dbReference type="CDD" id="cd17626">
    <property type="entry name" value="REC_OmpR_MtrA-like"/>
    <property type="match status" value="1"/>
</dbReference>
<dbReference type="CDD" id="cd00383">
    <property type="entry name" value="trans_reg_C"/>
    <property type="match status" value="1"/>
</dbReference>
<dbReference type="FunFam" id="1.10.10.10:FF:000033">
    <property type="entry name" value="DNA-binding response regulator MtrA"/>
    <property type="match status" value="1"/>
</dbReference>
<dbReference type="FunFam" id="3.40.50.2300:FF:000001">
    <property type="entry name" value="DNA-binding response regulator PhoB"/>
    <property type="match status" value="1"/>
</dbReference>
<dbReference type="Gene3D" id="3.40.50.2300">
    <property type="match status" value="1"/>
</dbReference>
<dbReference type="Gene3D" id="6.10.250.690">
    <property type="match status" value="1"/>
</dbReference>
<dbReference type="Gene3D" id="1.10.10.10">
    <property type="entry name" value="Winged helix-like DNA-binding domain superfamily/Winged helix DNA-binding domain"/>
    <property type="match status" value="1"/>
</dbReference>
<dbReference type="InterPro" id="IPR011006">
    <property type="entry name" value="CheY-like_superfamily"/>
</dbReference>
<dbReference type="InterPro" id="IPR047673">
    <property type="entry name" value="MtrA_REC"/>
</dbReference>
<dbReference type="InterPro" id="IPR047671">
    <property type="entry name" value="MtrAB_MtrA"/>
</dbReference>
<dbReference type="InterPro" id="IPR001867">
    <property type="entry name" value="OmpR/PhoB-type_DNA-bd"/>
</dbReference>
<dbReference type="InterPro" id="IPR001789">
    <property type="entry name" value="Sig_transdc_resp-reg_receiver"/>
</dbReference>
<dbReference type="InterPro" id="IPR039420">
    <property type="entry name" value="WalR-like"/>
</dbReference>
<dbReference type="InterPro" id="IPR036388">
    <property type="entry name" value="WH-like_DNA-bd_sf"/>
</dbReference>
<dbReference type="NCBIfam" id="NF040689">
    <property type="entry name" value="MtrAB_MtrA"/>
    <property type="match status" value="1"/>
</dbReference>
<dbReference type="PANTHER" id="PTHR48111:SF21">
    <property type="entry name" value="DNA-BINDING DUAL MASTER TRANSCRIPTIONAL REGULATOR RPAA"/>
    <property type="match status" value="1"/>
</dbReference>
<dbReference type="PANTHER" id="PTHR48111">
    <property type="entry name" value="REGULATOR OF RPOS"/>
    <property type="match status" value="1"/>
</dbReference>
<dbReference type="Pfam" id="PF00072">
    <property type="entry name" value="Response_reg"/>
    <property type="match status" value="1"/>
</dbReference>
<dbReference type="Pfam" id="PF00486">
    <property type="entry name" value="Trans_reg_C"/>
    <property type="match status" value="1"/>
</dbReference>
<dbReference type="SMART" id="SM00448">
    <property type="entry name" value="REC"/>
    <property type="match status" value="1"/>
</dbReference>
<dbReference type="SMART" id="SM00862">
    <property type="entry name" value="Trans_reg_C"/>
    <property type="match status" value="1"/>
</dbReference>
<dbReference type="SUPFAM" id="SSF52172">
    <property type="entry name" value="CheY-like"/>
    <property type="match status" value="1"/>
</dbReference>
<dbReference type="PROSITE" id="PS51755">
    <property type="entry name" value="OMPR_PHOB"/>
    <property type="match status" value="1"/>
</dbReference>
<dbReference type="PROSITE" id="PS50110">
    <property type="entry name" value="RESPONSE_REGULATORY"/>
    <property type="match status" value="1"/>
</dbReference>
<proteinExistence type="evidence at protein level"/>
<protein>
    <recommendedName>
        <fullName>DNA-binding response regulator MtrA</fullName>
    </recommendedName>
</protein>
<name>MTRA_MYCS2</name>
<sequence>MDTMRQRILVVDDDPSLAEMLTIVLRGEGFDTAVIGDGSQALTAVRELRPDLVLLDLMLPGMNGIDVCRVLRADSGVPIVMLTAKTDTVDVVLGLESGADDYVMKPFKPKELVARVRARLRRNEDEPAEMLSIGDVEIDVPAHKVTRQGEQISLTPLEFDLLVALARKPRQVFTRDVLLEQVWGYRHPADTRLVNVHVQRLRAKVEKDPENPQVVLTVRGVGYKAGPP</sequence>